<proteinExistence type="evidence at protein level"/>
<sequence>MSAFRFWSGLLMLLGFLCPRSSPCGISTHIEIGHRALEFLHLQDGSINYKELLLRHQDAYQAGSVFPDSFYPSICERGQFHDVSESTHWTPFLNASVHYIRKNYPLPWDEDTEKLVAFLFGITSHMVADVNWHSLGIEQGFLRTMAAIDFHNSYPEAHPAGDFGGDVLSQFEFKFNYLSRHWYVPAEDLLGIYRELYGRIVITKKAIVDCSYLQFLEMYAEMLAISKLYPTYSVKSPFLVEQFQEYFLGGLEDMAFWSTNIYHLTSYMLKNGTSNCNLPENPLFITCGGQQNNTHGSKVQKNGFHKNVTAALTKNIGKHINYTKRGVFFSVDSWTMDSLSFMYKSLERSIREMFIGSSQPLTHVSSPAASYYLSFPYTRLGWAMTSADLNQDGYGDLVVGAPGYSHPGRIHVGRVYLIYGNDLGLPRIDLDLDKEAHGILEGFQPSGRFGSAVAVLDFNVDGVPDLAVGAPSVGSEKLTYTGAVYVYFGSKQGQLSSSPNVTISCQDTYCNLGWTLLAADVNGDSEPDLVIGSPFAPGGGKQKGIVAAFYSGSSYSSREKLNVEAANWMVKGEEDFAWLGYSLHGVNVNNRTLLLAGSPTWKDTSSQGHLFRTRDEKQSPGRVYGYFPPICQSWFTISGDKAMGKLGTSLSSGHVMVNGTRTQVLLVGAPTQDVVSKVSFLTMTLHQGGSTRMYELTPDSQPSLLSTFSGNRRFSRFGGVLHLSDLDNDGLDEIIVAAPLRITDATAGLMGEEDGRVYVFNGKQITVGDVTGKCKSWVTPCPEEKAQYVLISPEAGSRFGSSVITVRSKEKNQVIIAAGRSSLGARLSGVLHIYRLGQD</sequence>
<comment type="function">
    <text evidence="6">This protein hydrolyzes the inositol phosphate linkage in proteins anchored by phosphatidylinositol glycans (GPI-anchor) thus releasing these proteins from the membrane.</text>
</comment>
<comment type="catalytic activity">
    <reaction evidence="4 5">
        <text>a 6-(alpha-D-glucosaminyl)-1-(1,2-diacyl-sn-glycero-3-phospho)-1D-myo-inositol + H2O = 6-(alpha-D-glucosaminyl)-1D-myo-inositol + a 1,2-diacyl-sn-glycero-3-phosphate + H(+)</text>
        <dbReference type="Rhea" id="RHEA:10832"/>
        <dbReference type="ChEBI" id="CHEBI:15377"/>
        <dbReference type="ChEBI" id="CHEBI:15378"/>
        <dbReference type="ChEBI" id="CHEBI:57997"/>
        <dbReference type="ChEBI" id="CHEBI:58608"/>
        <dbReference type="ChEBI" id="CHEBI:58700"/>
        <dbReference type="EC" id="3.1.4.50"/>
    </reaction>
</comment>
<comment type="subunit">
    <text evidence="7">Monomer.</text>
</comment>
<comment type="subcellular location">
    <subcellularLocation>
        <location evidence="6">Secreted</location>
    </subcellularLocation>
    <text>Associated with the High-Density Lipoproteins (HDL).</text>
</comment>
<comment type="PTM">
    <text evidence="5 6">Glycosylated.</text>
</comment>
<comment type="similarity">
    <text evidence="7">Belongs to the GPLD1 family.</text>
</comment>
<evidence type="ECO:0000255" key="1"/>
<evidence type="ECO:0000255" key="2">
    <source>
        <dbReference type="PROSITE-ProRule" id="PRU00803"/>
    </source>
</evidence>
<evidence type="ECO:0000269" key="3">
    <source>
    </source>
</evidence>
<evidence type="ECO:0000269" key="4">
    <source>
    </source>
</evidence>
<evidence type="ECO:0000269" key="5">
    <source>
    </source>
</evidence>
<evidence type="ECO:0000269" key="6">
    <source>
    </source>
</evidence>
<evidence type="ECO:0000305" key="7"/>
<gene>
    <name type="primary">GPLD1</name>
    <name type="synonym">PIGPLD</name>
</gene>
<accession>P80109</accession>
<keyword id="KW-0903">Direct protein sequencing</keyword>
<keyword id="KW-0325">Glycoprotein</keyword>
<keyword id="KW-0345">HDL</keyword>
<keyword id="KW-0378">Hydrolase</keyword>
<keyword id="KW-0443">Lipid metabolism</keyword>
<keyword id="KW-1185">Reference proteome</keyword>
<keyword id="KW-0677">Repeat</keyword>
<keyword id="KW-0964">Secreted</keyword>
<keyword id="KW-0732">Signal</keyword>
<name>PHLD_BOVIN</name>
<protein>
    <recommendedName>
        <fullName>Phosphatidylinositol-glycan-specific phospholipase D</fullName>
        <shortName>PI-G PLD</shortName>
        <ecNumber evidence="4 5">3.1.4.50</ecNumber>
    </recommendedName>
    <alternativeName>
        <fullName>Glycoprotein phospholipase D</fullName>
    </alternativeName>
    <alternativeName>
        <fullName>Glycosyl-phosphatidylinositol-specific phospholipase D</fullName>
        <shortName>GPI-PLD</shortName>
        <shortName>GPI-specific phospholipase D</shortName>
    </alternativeName>
</protein>
<reference key="1">
    <citation type="journal article" date="1991" name="Science">
        <title>Primary structure and functional activity of a phosphatidylinositol-glycan-specific phospholipase D.</title>
        <authorList>
            <person name="Scallon B.J."/>
            <person name="Fung W.-J.C."/>
            <person name="Tsang T.C."/>
            <person name="Li S."/>
            <person name="Kado-Fong H."/>
            <person name="Huang K.-S."/>
            <person name="Kochan J.P."/>
        </authorList>
    </citation>
    <scope>NUCLEOTIDE SEQUENCE [MRNA]</scope>
    <scope>CATALYTIC ACTIVITY</scope>
    <source>
        <tissue>Liver</tissue>
    </source>
</reference>
<reference key="2">
    <citation type="journal article" date="1990" name="J. Biol. Chem.">
        <title>Purification and characterization of glycosyl-phosphatidylinositol-specific phospholipase D.</title>
        <authorList>
            <person name="Huang K.S."/>
            <person name="Li S."/>
            <person name="Fung W.J."/>
            <person name="Hulmes J.D."/>
            <person name="Reik L."/>
            <person name="Pan Y.C."/>
            <person name="Low M.G."/>
        </authorList>
    </citation>
    <scope>PROTEIN SEQUENCE OF 36-50; 56-77; 126-138; 181-185; 235-261; 380-408; 449-477; 623-636; 678-692 AND 776-807</scope>
    <scope>GLYCOSYLATION</scope>
    <scope>CATALYTIC ACTIVITY</scope>
    <source>
        <tissue>Serum</tissue>
    </source>
</reference>
<reference key="3">
    <citation type="journal article" date="1992" name="Eur. J. Biochem.">
        <title>Phosphatidylinositol-glycan-specific phospholipase D is an amphiphilic glycoprotein that in serum is associated with high-density lipoproteins.</title>
        <authorList>
            <person name="Hoener M.C."/>
            <person name="Brodbeck U."/>
        </authorList>
    </citation>
    <scope>PROTEIN SEQUENCE OF 24-50; 126-138; 145-164; 353-367; 569-579; 693-708 AND 750-773</scope>
    <source>
        <tissue>Serum</tissue>
    </source>
</reference>
<reference key="4">
    <citation type="journal article" date="1997" name="Biochim. Biophys. Acta">
        <title>The C-terminus of glycosylphosphatidylinositol-specific phospholipase D is essential for biological activity.</title>
        <authorList>
            <person name="Stadelmann B."/>
            <person name="Buetikofer P."/>
            <person name="Koenig A."/>
            <person name="Brodbeck U."/>
        </authorList>
    </citation>
    <scope>FUNCTION</scope>
    <scope>MUTAGENESIS OF TYR-834</scope>
    <scope>SUBCELLULAR LOCATION</scope>
    <scope>GLYCOSYLATION</scope>
</reference>
<feature type="signal peptide" evidence="3">
    <location>
        <begin position="1"/>
        <end position="23"/>
    </location>
</feature>
<feature type="chain" id="PRO_0000022053" description="Phosphatidylinositol-glycan-specific phospholipase D">
    <location>
        <begin position="24"/>
        <end position="839"/>
    </location>
</feature>
<feature type="repeat" description="FG-GAP 1" evidence="2">
    <location>
        <begin position="365"/>
        <end position="427"/>
    </location>
</feature>
<feature type="repeat" description="FG-GAP 2" evidence="2">
    <location>
        <begin position="434"/>
        <end position="496"/>
    </location>
</feature>
<feature type="repeat" description="FG-GAP 3" evidence="2">
    <location>
        <begin position="498"/>
        <end position="558"/>
    </location>
</feature>
<feature type="repeat" description="FG-GAP 4" evidence="2">
    <location>
        <begin position="562"/>
        <end position="622"/>
    </location>
</feature>
<feature type="repeat" description="FG-GAP 5" evidence="2">
    <location>
        <begin position="632"/>
        <end position="692"/>
    </location>
</feature>
<feature type="repeat" description="FG-GAP 6" evidence="2">
    <location>
        <begin position="703"/>
        <end position="769"/>
    </location>
</feature>
<feature type="repeat" description="FG-GAP 7" evidence="2">
    <location>
        <begin position="787"/>
        <end position="839"/>
    </location>
</feature>
<feature type="glycosylation site" description="N-linked (GlcNAc...) asparagine" evidence="1">
    <location>
        <position position="94"/>
    </location>
</feature>
<feature type="glycosylation site" description="N-linked (GlcNAc...) asparagine" evidence="1">
    <location>
        <position position="271"/>
    </location>
</feature>
<feature type="glycosylation site" description="N-linked (GlcNAc...) asparagine" evidence="1">
    <location>
        <position position="292"/>
    </location>
</feature>
<feature type="glycosylation site" description="N-linked (GlcNAc...) asparagine" evidence="1">
    <location>
        <position position="307"/>
    </location>
</feature>
<feature type="glycosylation site" description="N-linked (GlcNAc...) asparagine" evidence="1">
    <location>
        <position position="321"/>
    </location>
</feature>
<feature type="glycosylation site" description="N-linked (GlcNAc...) asparagine" evidence="1">
    <location>
        <position position="500"/>
    </location>
</feature>
<feature type="glycosylation site" description="N-linked (GlcNAc...) asparagine" evidence="1">
    <location>
        <position position="590"/>
    </location>
</feature>
<feature type="glycosylation site" description="N-linked (GlcNAc...) asparagine" evidence="1">
    <location>
        <position position="658"/>
    </location>
</feature>
<feature type="mutagenesis site" description="Severe loss of enzymatic activity." evidence="6">
    <original>Y</original>
    <variation>A</variation>
    <location>
        <position position="834"/>
    </location>
</feature>
<feature type="sequence conflict" description="In Ref. 2; AA sequence." evidence="7" ref="2">
    <original>H</original>
    <variation>F</variation>
    <location>
        <position position="181"/>
    </location>
</feature>
<feature type="sequence conflict" description="In Ref. 2; AA sequence." evidence="7" ref="2">
    <original>V</original>
    <variation>L</variation>
    <location>
        <position position="184"/>
    </location>
</feature>
<feature type="sequence conflict" description="In Ref. 2; AA sequence." evidence="7" ref="2">
    <original>K</original>
    <variation>R</variation>
    <location>
        <position position="235"/>
    </location>
</feature>
<feature type="sequence conflict" description="In Ref. 2; AA sequence." evidence="7" ref="2">
    <original>W</original>
    <variation>P</variation>
    <location>
        <position position="634"/>
    </location>
</feature>
<feature type="sequence conflict" description="In Ref. 2; AA sequence." evidence="7" ref="2">
    <original>W</original>
    <variation>N</variation>
    <location>
        <position position="777"/>
    </location>
</feature>
<feature type="sequence conflict" description="In Ref. 2; AA sequence." evidence="7" ref="2">
    <original>P</original>
    <variation>S</variation>
    <location>
        <position position="780"/>
    </location>
</feature>
<dbReference type="EC" id="3.1.4.50" evidence="4 5"/>
<dbReference type="EMBL" id="M60804">
    <property type="protein sequence ID" value="AAA30721.1"/>
    <property type="molecule type" value="mRNA"/>
</dbReference>
<dbReference type="PIR" id="A56337">
    <property type="entry name" value="A56337"/>
</dbReference>
<dbReference type="RefSeq" id="NP_777241.1">
    <property type="nucleotide sequence ID" value="NM_174816.2"/>
</dbReference>
<dbReference type="FunCoup" id="P80109">
    <property type="interactions" value="6"/>
</dbReference>
<dbReference type="STRING" id="9913.ENSBTAP00000006557"/>
<dbReference type="GlyCosmos" id="P80109">
    <property type="glycosylation" value="8 sites, No reported glycans"/>
</dbReference>
<dbReference type="GlyGen" id="P80109">
    <property type="glycosylation" value="8 sites"/>
</dbReference>
<dbReference type="iPTMnet" id="P80109"/>
<dbReference type="PaxDb" id="9913-ENSBTAP00000006557"/>
<dbReference type="GeneID" id="287025"/>
<dbReference type="KEGG" id="bta:287025"/>
<dbReference type="CTD" id="2822"/>
<dbReference type="eggNOG" id="KOG3637">
    <property type="taxonomic scope" value="Eukaryota"/>
</dbReference>
<dbReference type="InParanoid" id="P80109"/>
<dbReference type="OrthoDB" id="5317514at2759"/>
<dbReference type="BRENDA" id="3.1.4.50">
    <property type="organism ID" value="908"/>
</dbReference>
<dbReference type="Proteomes" id="UP000009136">
    <property type="component" value="Unplaced"/>
</dbReference>
<dbReference type="GO" id="GO:0005737">
    <property type="term" value="C:cytoplasm"/>
    <property type="evidence" value="ECO:0000250"/>
    <property type="project" value="UniProtKB"/>
</dbReference>
<dbReference type="GO" id="GO:0031012">
    <property type="term" value="C:extracellular matrix"/>
    <property type="evidence" value="ECO:0000250"/>
    <property type="project" value="UniProtKB"/>
</dbReference>
<dbReference type="GO" id="GO:0005615">
    <property type="term" value="C:extracellular space"/>
    <property type="evidence" value="ECO:0000314"/>
    <property type="project" value="UniProtKB"/>
</dbReference>
<dbReference type="GO" id="GO:0034364">
    <property type="term" value="C:high-density lipoprotein particle"/>
    <property type="evidence" value="ECO:0007669"/>
    <property type="project" value="UniProtKB-KW"/>
</dbReference>
<dbReference type="GO" id="GO:0043231">
    <property type="term" value="C:intracellular membrane-bounded organelle"/>
    <property type="evidence" value="ECO:0000250"/>
    <property type="project" value="UniProtKB"/>
</dbReference>
<dbReference type="GO" id="GO:0004621">
    <property type="term" value="F:glycosylphosphatidylinositol phospholipase D activity"/>
    <property type="evidence" value="ECO:0000314"/>
    <property type="project" value="UniProtKB"/>
</dbReference>
<dbReference type="GO" id="GO:0017080">
    <property type="term" value="F:sodium channel regulator activity"/>
    <property type="evidence" value="ECO:0000250"/>
    <property type="project" value="UniProtKB"/>
</dbReference>
<dbReference type="GO" id="GO:0002042">
    <property type="term" value="P:cell migration involved in sprouting angiogenesis"/>
    <property type="evidence" value="ECO:0000250"/>
    <property type="project" value="UniProtKB"/>
</dbReference>
<dbReference type="GO" id="GO:0071397">
    <property type="term" value="P:cellular response to cholesterol"/>
    <property type="evidence" value="ECO:0000250"/>
    <property type="project" value="UniProtKB"/>
</dbReference>
<dbReference type="GO" id="GO:0032869">
    <property type="term" value="P:cellular response to insulin stimulus"/>
    <property type="evidence" value="ECO:0000250"/>
    <property type="project" value="UniProtKB"/>
</dbReference>
<dbReference type="GO" id="GO:0071467">
    <property type="term" value="P:cellular response to pH"/>
    <property type="evidence" value="ECO:0000250"/>
    <property type="project" value="UniProtKB"/>
</dbReference>
<dbReference type="GO" id="GO:0071401">
    <property type="term" value="P:cellular response to triglyceride"/>
    <property type="evidence" value="ECO:0000250"/>
    <property type="project" value="UniProtKB"/>
</dbReference>
<dbReference type="GO" id="GO:0071466">
    <property type="term" value="P:cellular response to xenobiotic stimulus"/>
    <property type="evidence" value="ECO:0000250"/>
    <property type="project" value="UniProtKB"/>
</dbReference>
<dbReference type="GO" id="GO:0002062">
    <property type="term" value="P:chondrocyte differentiation"/>
    <property type="evidence" value="ECO:0000250"/>
    <property type="project" value="UniProtKB"/>
</dbReference>
<dbReference type="GO" id="GO:0002430">
    <property type="term" value="P:complement receptor mediated signaling pathway"/>
    <property type="evidence" value="ECO:0000250"/>
    <property type="project" value="UniProtKB"/>
</dbReference>
<dbReference type="GO" id="GO:0008286">
    <property type="term" value="P:insulin receptor signaling pathway"/>
    <property type="evidence" value="ECO:0000250"/>
    <property type="project" value="UniProtKB"/>
</dbReference>
<dbReference type="GO" id="GO:0008285">
    <property type="term" value="P:negative regulation of cell population proliferation"/>
    <property type="evidence" value="ECO:0000250"/>
    <property type="project" value="UniProtKB"/>
</dbReference>
<dbReference type="GO" id="GO:0010897">
    <property type="term" value="P:negative regulation of triglyceride catabolic process"/>
    <property type="evidence" value="ECO:0000250"/>
    <property type="project" value="UniProtKB"/>
</dbReference>
<dbReference type="GO" id="GO:0001503">
    <property type="term" value="P:ossification"/>
    <property type="evidence" value="ECO:0000250"/>
    <property type="project" value="UniProtKB"/>
</dbReference>
<dbReference type="GO" id="GO:0046470">
    <property type="term" value="P:phosphatidylcholine metabolic process"/>
    <property type="evidence" value="ECO:0000314"/>
    <property type="project" value="UniProtKB"/>
</dbReference>
<dbReference type="GO" id="GO:0010694">
    <property type="term" value="P:positive regulation of alkaline phosphatase activity"/>
    <property type="evidence" value="ECO:0000314"/>
    <property type="project" value="UniProtKB"/>
</dbReference>
<dbReference type="GO" id="GO:0043065">
    <property type="term" value="P:positive regulation of apoptotic process"/>
    <property type="evidence" value="ECO:0000250"/>
    <property type="project" value="UniProtKB"/>
</dbReference>
<dbReference type="GO" id="GO:0010595">
    <property type="term" value="P:positive regulation of endothelial cell migration"/>
    <property type="evidence" value="ECO:0000250"/>
    <property type="project" value="UniProtKB"/>
</dbReference>
<dbReference type="GO" id="GO:0010907">
    <property type="term" value="P:positive regulation of glucose metabolic process"/>
    <property type="evidence" value="ECO:0000250"/>
    <property type="project" value="UniProtKB"/>
</dbReference>
<dbReference type="GO" id="GO:0010983">
    <property type="term" value="P:positive regulation of high-density lipoprotein particle clearance"/>
    <property type="evidence" value="ECO:0000250"/>
    <property type="project" value="UniProtKB"/>
</dbReference>
<dbReference type="GO" id="GO:0035774">
    <property type="term" value="P:positive regulation of insulin secretion involved in cellular response to glucose stimulus"/>
    <property type="evidence" value="ECO:0000250"/>
    <property type="project" value="UniProtKB"/>
</dbReference>
<dbReference type="GO" id="GO:0051044">
    <property type="term" value="P:positive regulation of membrane protein ectodomain proteolysis"/>
    <property type="evidence" value="ECO:0000250"/>
    <property type="project" value="UniProtKB"/>
</dbReference>
<dbReference type="GO" id="GO:0010867">
    <property type="term" value="P:positive regulation of triglyceride biosynthetic process"/>
    <property type="evidence" value="ECO:0000250"/>
    <property type="project" value="UniProtKB"/>
</dbReference>
<dbReference type="GO" id="GO:0009306">
    <property type="term" value="P:protein secretion"/>
    <property type="evidence" value="ECO:0000314"/>
    <property type="project" value="UniProtKB"/>
</dbReference>
<dbReference type="GO" id="GO:1900076">
    <property type="term" value="P:regulation of cellular response to insulin stimulus"/>
    <property type="evidence" value="ECO:0000250"/>
    <property type="project" value="UniProtKB"/>
</dbReference>
<dbReference type="GO" id="GO:0009749">
    <property type="term" value="P:response to glucose"/>
    <property type="evidence" value="ECO:0000250"/>
    <property type="project" value="UniProtKB"/>
</dbReference>
<dbReference type="GO" id="GO:0070633">
    <property type="term" value="P:transepithelial transport"/>
    <property type="evidence" value="ECO:0000250"/>
    <property type="project" value="UniProtKB"/>
</dbReference>
<dbReference type="FunFam" id="2.130.10.130:FF:000010">
    <property type="entry name" value="Glycosylphosphatidylinositol specific phospholipase D1"/>
    <property type="match status" value="1"/>
</dbReference>
<dbReference type="FunFam" id="2.130.10.130:FF:000011">
    <property type="entry name" value="Glycosylphosphatidylinositol specific phospholipase D1"/>
    <property type="match status" value="1"/>
</dbReference>
<dbReference type="Gene3D" id="2.130.10.130">
    <property type="entry name" value="Integrin alpha, N-terminal"/>
    <property type="match status" value="2"/>
</dbReference>
<dbReference type="InterPro" id="IPR013517">
    <property type="entry name" value="FG-GAP"/>
</dbReference>
<dbReference type="InterPro" id="IPR001028">
    <property type="entry name" value="Gprt_PLipase_D"/>
</dbReference>
<dbReference type="InterPro" id="IPR013519">
    <property type="entry name" value="Int_alpha_beta-p"/>
</dbReference>
<dbReference type="InterPro" id="IPR028994">
    <property type="entry name" value="Integrin_alpha_N"/>
</dbReference>
<dbReference type="InterPro" id="IPR029002">
    <property type="entry name" value="PLPC/GPLD1"/>
</dbReference>
<dbReference type="PANTHER" id="PTHR23221">
    <property type="entry name" value="GLYCOSYLPHOSPHATIDYLINOSITOL PHOSPHOLIPASE D"/>
    <property type="match status" value="1"/>
</dbReference>
<dbReference type="PANTHER" id="PTHR23221:SF7">
    <property type="entry name" value="PHOSPHATIDYLINOSITOL-GLYCAN-SPECIFIC PHOSPHOLIPASE D"/>
    <property type="match status" value="1"/>
</dbReference>
<dbReference type="Pfam" id="PF01839">
    <property type="entry name" value="FG-GAP"/>
    <property type="match status" value="4"/>
</dbReference>
<dbReference type="Pfam" id="PF00882">
    <property type="entry name" value="Zn_dep_PLPC"/>
    <property type="match status" value="1"/>
</dbReference>
<dbReference type="PRINTS" id="PR00718">
    <property type="entry name" value="PHPHLIPASED"/>
</dbReference>
<dbReference type="SMART" id="SM00191">
    <property type="entry name" value="Int_alpha"/>
    <property type="match status" value="5"/>
</dbReference>
<dbReference type="SUPFAM" id="SSF69318">
    <property type="entry name" value="Integrin alpha N-terminal domain"/>
    <property type="match status" value="1"/>
</dbReference>
<dbReference type="PROSITE" id="PS51470">
    <property type="entry name" value="FG_GAP"/>
    <property type="match status" value="7"/>
</dbReference>
<organism>
    <name type="scientific">Bos taurus</name>
    <name type="common">Bovine</name>
    <dbReference type="NCBI Taxonomy" id="9913"/>
    <lineage>
        <taxon>Eukaryota</taxon>
        <taxon>Metazoa</taxon>
        <taxon>Chordata</taxon>
        <taxon>Craniata</taxon>
        <taxon>Vertebrata</taxon>
        <taxon>Euteleostomi</taxon>
        <taxon>Mammalia</taxon>
        <taxon>Eutheria</taxon>
        <taxon>Laurasiatheria</taxon>
        <taxon>Artiodactyla</taxon>
        <taxon>Ruminantia</taxon>
        <taxon>Pecora</taxon>
        <taxon>Bovidae</taxon>
        <taxon>Bovinae</taxon>
        <taxon>Bos</taxon>
    </lineage>
</organism>